<sequence length="213" mass="23567">MKPYQRQFIEFALSKQVLKFGEFTLKSGRKSPYFFNAGLFNTGRDLALLGRFYAEALVDSGIEFDLLFGPAYKGIPIATTTAVALAEHHDLDLPYCFNRKEAKDHGEGGNLVGSALQGRVMLVDDVITAGTAIRESMEIIQANGATLAGVLISLDRQERGRGEISAIQEVERDYNCKVISIITLKDLIAYLEEKPEMAEHLAAVKAYREEFGV</sequence>
<evidence type="ECO:0000250" key="1"/>
<evidence type="ECO:0000255" key="2">
    <source>
        <dbReference type="HAMAP-Rule" id="MF_01208"/>
    </source>
</evidence>
<evidence type="ECO:0000305" key="3"/>
<accession>P0A7E4</accession>
<accession>P00495</accession>
<proteinExistence type="inferred from homology"/>
<protein>
    <recommendedName>
        <fullName evidence="2">Orotate phosphoribosyltransferase</fullName>
        <shortName evidence="2">OPRT</shortName>
        <shortName evidence="2">OPRTase</shortName>
        <ecNumber evidence="2">2.4.2.10</ecNumber>
    </recommendedName>
</protein>
<organism>
    <name type="scientific">Escherichia coli O6:H1 (strain CFT073 / ATCC 700928 / UPEC)</name>
    <dbReference type="NCBI Taxonomy" id="199310"/>
    <lineage>
        <taxon>Bacteria</taxon>
        <taxon>Pseudomonadati</taxon>
        <taxon>Pseudomonadota</taxon>
        <taxon>Gammaproteobacteria</taxon>
        <taxon>Enterobacterales</taxon>
        <taxon>Enterobacteriaceae</taxon>
        <taxon>Escherichia</taxon>
    </lineage>
</organism>
<reference key="1">
    <citation type="journal article" date="2002" name="Proc. Natl. Acad. Sci. U.S.A.">
        <title>Extensive mosaic structure revealed by the complete genome sequence of uropathogenic Escherichia coli.</title>
        <authorList>
            <person name="Welch R.A."/>
            <person name="Burland V."/>
            <person name="Plunkett G. III"/>
            <person name="Redford P."/>
            <person name="Roesch P."/>
            <person name="Rasko D."/>
            <person name="Buckles E.L."/>
            <person name="Liou S.-R."/>
            <person name="Boutin A."/>
            <person name="Hackett J."/>
            <person name="Stroud D."/>
            <person name="Mayhew G.F."/>
            <person name="Rose D.J."/>
            <person name="Zhou S."/>
            <person name="Schwartz D.C."/>
            <person name="Perna N.T."/>
            <person name="Mobley H.L.T."/>
            <person name="Donnenberg M.S."/>
            <person name="Blattner F.R."/>
        </authorList>
    </citation>
    <scope>NUCLEOTIDE SEQUENCE [LARGE SCALE GENOMIC DNA]</scope>
    <source>
        <strain>CFT073 / ATCC 700928 / UPEC</strain>
    </source>
</reference>
<keyword id="KW-0328">Glycosyltransferase</keyword>
<keyword id="KW-0460">Magnesium</keyword>
<keyword id="KW-0665">Pyrimidine biosynthesis</keyword>
<keyword id="KW-1185">Reference proteome</keyword>
<keyword id="KW-0808">Transferase</keyword>
<comment type="function">
    <text evidence="2">Catalyzes the transfer of a ribosyl phosphate group from 5-phosphoribose 1-diphosphate to orotate, leading to the formation of orotidine monophosphate (OMP).</text>
</comment>
<comment type="catalytic activity">
    <reaction evidence="2">
        <text>orotidine 5'-phosphate + diphosphate = orotate + 5-phospho-alpha-D-ribose 1-diphosphate</text>
        <dbReference type="Rhea" id="RHEA:10380"/>
        <dbReference type="ChEBI" id="CHEBI:30839"/>
        <dbReference type="ChEBI" id="CHEBI:33019"/>
        <dbReference type="ChEBI" id="CHEBI:57538"/>
        <dbReference type="ChEBI" id="CHEBI:58017"/>
        <dbReference type="EC" id="2.4.2.10"/>
    </reaction>
</comment>
<comment type="cofactor">
    <cofactor evidence="2">
        <name>Mg(2+)</name>
        <dbReference type="ChEBI" id="CHEBI:18420"/>
    </cofactor>
</comment>
<comment type="pathway">
    <text evidence="2">Pyrimidine metabolism; UMP biosynthesis via de novo pathway; UMP from orotate: step 1/2.</text>
</comment>
<comment type="subunit">
    <text evidence="2">Homodimer.</text>
</comment>
<comment type="similarity">
    <text evidence="2">Belongs to the purine/pyrimidine phosphoribosyltransferase family. PyrE subfamily.</text>
</comment>
<comment type="sequence caution" evidence="3">
    <conflict type="erroneous initiation">
        <sequence resource="EMBL-CDS" id="AAN82902"/>
    </conflict>
</comment>
<dbReference type="EC" id="2.4.2.10" evidence="2"/>
<dbReference type="EMBL" id="AE014075">
    <property type="protein sequence ID" value="AAN82902.1"/>
    <property type="status" value="ALT_INIT"/>
    <property type="molecule type" value="Genomic_DNA"/>
</dbReference>
<dbReference type="RefSeq" id="WP_000806177.1">
    <property type="nucleotide sequence ID" value="NZ_CP051263.1"/>
</dbReference>
<dbReference type="SMR" id="P0A7E4"/>
<dbReference type="STRING" id="199310.c4466"/>
<dbReference type="GeneID" id="75202211"/>
<dbReference type="KEGG" id="ecc:c4466"/>
<dbReference type="eggNOG" id="COG0461">
    <property type="taxonomic scope" value="Bacteria"/>
</dbReference>
<dbReference type="HOGENOM" id="CLU_074878_0_1_6"/>
<dbReference type="UniPathway" id="UPA00070">
    <property type="reaction ID" value="UER00119"/>
</dbReference>
<dbReference type="Proteomes" id="UP000001410">
    <property type="component" value="Chromosome"/>
</dbReference>
<dbReference type="GO" id="GO:0005737">
    <property type="term" value="C:cytoplasm"/>
    <property type="evidence" value="ECO:0007669"/>
    <property type="project" value="TreeGrafter"/>
</dbReference>
<dbReference type="GO" id="GO:0000287">
    <property type="term" value="F:magnesium ion binding"/>
    <property type="evidence" value="ECO:0007669"/>
    <property type="project" value="UniProtKB-UniRule"/>
</dbReference>
<dbReference type="GO" id="GO:0004588">
    <property type="term" value="F:orotate phosphoribosyltransferase activity"/>
    <property type="evidence" value="ECO:0007669"/>
    <property type="project" value="UniProtKB-UniRule"/>
</dbReference>
<dbReference type="GO" id="GO:0006207">
    <property type="term" value="P:'de novo' pyrimidine nucleobase biosynthetic process"/>
    <property type="evidence" value="ECO:0007669"/>
    <property type="project" value="TreeGrafter"/>
</dbReference>
<dbReference type="GO" id="GO:0044205">
    <property type="term" value="P:'de novo' UMP biosynthetic process"/>
    <property type="evidence" value="ECO:0007669"/>
    <property type="project" value="UniProtKB-UniRule"/>
</dbReference>
<dbReference type="GO" id="GO:0046132">
    <property type="term" value="P:pyrimidine ribonucleoside biosynthetic process"/>
    <property type="evidence" value="ECO:0007669"/>
    <property type="project" value="TreeGrafter"/>
</dbReference>
<dbReference type="CDD" id="cd06223">
    <property type="entry name" value="PRTases_typeI"/>
    <property type="match status" value="1"/>
</dbReference>
<dbReference type="FunFam" id="3.40.50.2020:FF:000008">
    <property type="entry name" value="Orotate phosphoribosyltransferase"/>
    <property type="match status" value="1"/>
</dbReference>
<dbReference type="Gene3D" id="3.40.50.2020">
    <property type="match status" value="1"/>
</dbReference>
<dbReference type="HAMAP" id="MF_01208">
    <property type="entry name" value="PyrE"/>
    <property type="match status" value="1"/>
</dbReference>
<dbReference type="InterPro" id="IPR023031">
    <property type="entry name" value="OPRT"/>
</dbReference>
<dbReference type="InterPro" id="IPR004467">
    <property type="entry name" value="Or_phspho_trans_dom"/>
</dbReference>
<dbReference type="InterPro" id="IPR000836">
    <property type="entry name" value="PRibTrfase_dom"/>
</dbReference>
<dbReference type="InterPro" id="IPR029057">
    <property type="entry name" value="PRTase-like"/>
</dbReference>
<dbReference type="NCBIfam" id="TIGR00336">
    <property type="entry name" value="pyrE"/>
    <property type="match status" value="1"/>
</dbReference>
<dbReference type="PANTHER" id="PTHR46683">
    <property type="entry name" value="OROTATE PHOSPHORIBOSYLTRANSFERASE 1-RELATED"/>
    <property type="match status" value="1"/>
</dbReference>
<dbReference type="PANTHER" id="PTHR46683:SF1">
    <property type="entry name" value="OROTATE PHOSPHORIBOSYLTRANSFERASE 1-RELATED"/>
    <property type="match status" value="1"/>
</dbReference>
<dbReference type="Pfam" id="PF00156">
    <property type="entry name" value="Pribosyltran"/>
    <property type="match status" value="1"/>
</dbReference>
<dbReference type="SUPFAM" id="SSF53271">
    <property type="entry name" value="PRTase-like"/>
    <property type="match status" value="1"/>
</dbReference>
<dbReference type="PROSITE" id="PS00103">
    <property type="entry name" value="PUR_PYR_PR_TRANSFER"/>
    <property type="match status" value="1"/>
</dbReference>
<feature type="initiator methionine" description="Removed" evidence="1">
    <location>
        <position position="1"/>
    </location>
</feature>
<feature type="chain" id="PRO_0000110696" description="Orotate phosphoribosyltransferase">
    <location>
        <begin position="2"/>
        <end position="213"/>
    </location>
</feature>
<feature type="binding site" description="in other chain" evidence="2">
    <location>
        <position position="26"/>
    </location>
    <ligand>
        <name>5-phospho-alpha-D-ribose 1-diphosphate</name>
        <dbReference type="ChEBI" id="CHEBI:58017"/>
        <note>ligand shared between dimeric partners</note>
    </ligand>
</feature>
<feature type="binding site" evidence="2">
    <location>
        <begin position="34"/>
        <end position="35"/>
    </location>
    <ligand>
        <name>orotate</name>
        <dbReference type="ChEBI" id="CHEBI:30839"/>
    </ligand>
</feature>
<feature type="binding site" description="in other chain" evidence="2">
    <location>
        <begin position="72"/>
        <end position="73"/>
    </location>
    <ligand>
        <name>5-phospho-alpha-D-ribose 1-diphosphate</name>
        <dbReference type="ChEBI" id="CHEBI:58017"/>
        <note>ligand shared between dimeric partners</note>
    </ligand>
</feature>
<feature type="binding site" evidence="2">
    <location>
        <position position="99"/>
    </location>
    <ligand>
        <name>5-phospho-alpha-D-ribose 1-diphosphate</name>
        <dbReference type="ChEBI" id="CHEBI:58017"/>
        <note>ligand shared between dimeric partners</note>
    </ligand>
</feature>
<feature type="binding site" description="in other chain" evidence="2">
    <location>
        <position position="100"/>
    </location>
    <ligand>
        <name>5-phospho-alpha-D-ribose 1-diphosphate</name>
        <dbReference type="ChEBI" id="CHEBI:58017"/>
        <note>ligand shared between dimeric partners</note>
    </ligand>
</feature>
<feature type="binding site" evidence="2">
    <location>
        <position position="103"/>
    </location>
    <ligand>
        <name>5-phospho-alpha-D-ribose 1-diphosphate</name>
        <dbReference type="ChEBI" id="CHEBI:58017"/>
        <note>ligand shared between dimeric partners</note>
    </ligand>
</feature>
<feature type="binding site" evidence="2">
    <location>
        <position position="105"/>
    </location>
    <ligand>
        <name>5-phospho-alpha-D-ribose 1-diphosphate</name>
        <dbReference type="ChEBI" id="CHEBI:58017"/>
        <note>ligand shared between dimeric partners</note>
    </ligand>
</feature>
<feature type="binding site" description="in other chain" evidence="2">
    <location>
        <begin position="124"/>
        <end position="132"/>
    </location>
    <ligand>
        <name>5-phospho-alpha-D-ribose 1-diphosphate</name>
        <dbReference type="ChEBI" id="CHEBI:58017"/>
        <note>ligand shared between dimeric partners</note>
    </ligand>
</feature>
<feature type="binding site" evidence="2">
    <location>
        <position position="128"/>
    </location>
    <ligand>
        <name>orotate</name>
        <dbReference type="ChEBI" id="CHEBI:30839"/>
    </ligand>
</feature>
<feature type="binding site" evidence="2">
    <location>
        <position position="156"/>
    </location>
    <ligand>
        <name>orotate</name>
        <dbReference type="ChEBI" id="CHEBI:30839"/>
    </ligand>
</feature>
<gene>
    <name evidence="2" type="primary">pyrE</name>
    <name type="ordered locus">c4466</name>
</gene>
<name>PYRE_ECOL6</name>